<comment type="subcellular location">
    <subcellularLocation>
        <location evidence="1">Cell inner membrane</location>
        <topology evidence="1">Multi-pass membrane protein</topology>
    </subcellularLocation>
</comment>
<comment type="similarity">
    <text evidence="1">Belongs to the UPF0299 family.</text>
</comment>
<reference key="1">
    <citation type="journal article" date="2010" name="PLoS Genet.">
        <title>Genome sequence of the plant growth promoting endophytic bacterium Enterobacter sp. 638.</title>
        <authorList>
            <person name="Taghavi S."/>
            <person name="van der Lelie D."/>
            <person name="Hoffman A."/>
            <person name="Zhang Y.B."/>
            <person name="Walla M.D."/>
            <person name="Vangronsveld J."/>
            <person name="Newman L."/>
            <person name="Monchy S."/>
        </authorList>
    </citation>
    <scope>NUCLEOTIDE SEQUENCE [LARGE SCALE GENOMIC DNA]</scope>
    <source>
        <strain>638</strain>
    </source>
</reference>
<gene>
    <name type="ordered locus">Ent638_2744</name>
</gene>
<feature type="chain" id="PRO_1000065457" description="UPF0299 membrane protein Ent638_2744">
    <location>
        <begin position="1"/>
        <end position="132"/>
    </location>
</feature>
<feature type="transmembrane region" description="Helical" evidence="1">
    <location>
        <begin position="8"/>
        <end position="28"/>
    </location>
</feature>
<feature type="transmembrane region" description="Helical" evidence="1">
    <location>
        <begin position="31"/>
        <end position="51"/>
    </location>
</feature>
<feature type="transmembrane region" description="Helical" evidence="1">
    <location>
        <begin position="63"/>
        <end position="83"/>
    </location>
</feature>
<feature type="transmembrane region" description="Helical" evidence="1">
    <location>
        <begin position="93"/>
        <end position="113"/>
    </location>
</feature>
<protein>
    <recommendedName>
        <fullName evidence="1">UPF0299 membrane protein Ent638_2744</fullName>
    </recommendedName>
</protein>
<dbReference type="EMBL" id="CP000653">
    <property type="protein sequence ID" value="ABP61409.1"/>
    <property type="molecule type" value="Genomic_DNA"/>
</dbReference>
<dbReference type="RefSeq" id="WP_015959742.1">
    <property type="nucleotide sequence ID" value="NC_009436.1"/>
</dbReference>
<dbReference type="SMR" id="A4WCH9"/>
<dbReference type="STRING" id="399742.Ent638_2744"/>
<dbReference type="KEGG" id="ent:Ent638_2744"/>
<dbReference type="eggNOG" id="COG1380">
    <property type="taxonomic scope" value="Bacteria"/>
</dbReference>
<dbReference type="HOGENOM" id="CLU_113736_1_1_6"/>
<dbReference type="OrthoDB" id="385012at2"/>
<dbReference type="Proteomes" id="UP000000230">
    <property type="component" value="Chromosome"/>
</dbReference>
<dbReference type="GO" id="GO:0005886">
    <property type="term" value="C:plasma membrane"/>
    <property type="evidence" value="ECO:0007669"/>
    <property type="project" value="UniProtKB-SubCell"/>
</dbReference>
<dbReference type="HAMAP" id="MF_01144">
    <property type="entry name" value="UPF0299"/>
    <property type="match status" value="1"/>
</dbReference>
<dbReference type="InterPro" id="IPR005538">
    <property type="entry name" value="LrgA/CidA"/>
</dbReference>
<dbReference type="InterPro" id="IPR022957">
    <property type="entry name" value="Uncharacterised_UPF0299"/>
</dbReference>
<dbReference type="NCBIfam" id="NF002494">
    <property type="entry name" value="PRK01821.1"/>
    <property type="match status" value="1"/>
</dbReference>
<dbReference type="PANTHER" id="PTHR33931">
    <property type="entry name" value="HOLIN-LIKE PROTEIN CIDA-RELATED"/>
    <property type="match status" value="1"/>
</dbReference>
<dbReference type="PANTHER" id="PTHR33931:SF5">
    <property type="entry name" value="UPF0299 MEMBRANE PROTEIN YOHJ"/>
    <property type="match status" value="1"/>
</dbReference>
<dbReference type="Pfam" id="PF03788">
    <property type="entry name" value="LrgA"/>
    <property type="match status" value="1"/>
</dbReference>
<sequence>MIKALNTVWQYLRAFILIYACLYAGIFIASLLPITIPGSIIGMLIMFLLLALQILPAKWVNPGCFVLIRYMALLFVPIGVGVMQYYDVLKAQFGPIVVSCAISTLVVFLVVSWSSHLVHGERKVVGQKGNQK</sequence>
<organism>
    <name type="scientific">Enterobacter sp. (strain 638)</name>
    <dbReference type="NCBI Taxonomy" id="399742"/>
    <lineage>
        <taxon>Bacteria</taxon>
        <taxon>Pseudomonadati</taxon>
        <taxon>Pseudomonadota</taxon>
        <taxon>Gammaproteobacteria</taxon>
        <taxon>Enterobacterales</taxon>
        <taxon>Enterobacteriaceae</taxon>
        <taxon>Enterobacter</taxon>
    </lineage>
</organism>
<proteinExistence type="inferred from homology"/>
<evidence type="ECO:0000255" key="1">
    <source>
        <dbReference type="HAMAP-Rule" id="MF_01144"/>
    </source>
</evidence>
<name>Y2744_ENT38</name>
<keyword id="KW-0997">Cell inner membrane</keyword>
<keyword id="KW-1003">Cell membrane</keyword>
<keyword id="KW-0472">Membrane</keyword>
<keyword id="KW-0812">Transmembrane</keyword>
<keyword id="KW-1133">Transmembrane helix</keyword>
<accession>A4WCH9</accession>